<gene>
    <name evidence="1" type="primary">dxs</name>
    <name type="ordered locus">RB2143</name>
</gene>
<organism>
    <name type="scientific">Rhodopirellula baltica (strain DSM 10527 / NCIMB 13988 / SH1)</name>
    <dbReference type="NCBI Taxonomy" id="243090"/>
    <lineage>
        <taxon>Bacteria</taxon>
        <taxon>Pseudomonadati</taxon>
        <taxon>Planctomycetota</taxon>
        <taxon>Planctomycetia</taxon>
        <taxon>Pirellulales</taxon>
        <taxon>Pirellulaceae</taxon>
        <taxon>Rhodopirellula</taxon>
    </lineage>
</organism>
<accession>Q7UWB7</accession>
<proteinExistence type="inferred from homology"/>
<name>DXS_RHOBA</name>
<dbReference type="EC" id="2.2.1.7" evidence="1"/>
<dbReference type="EMBL" id="BX294136">
    <property type="protein sequence ID" value="CAD72449.1"/>
    <property type="molecule type" value="Genomic_DNA"/>
</dbReference>
<dbReference type="RefSeq" id="NP_864765.1">
    <property type="nucleotide sequence ID" value="NC_005027.1"/>
</dbReference>
<dbReference type="RefSeq" id="WP_007325559.1">
    <property type="nucleotide sequence ID" value="NC_005027.1"/>
</dbReference>
<dbReference type="SMR" id="Q7UWB7"/>
<dbReference type="FunCoup" id="Q7UWB7">
    <property type="interactions" value="452"/>
</dbReference>
<dbReference type="STRING" id="243090.RB2143"/>
<dbReference type="EnsemblBacteria" id="CAD72449">
    <property type="protein sequence ID" value="CAD72449"/>
    <property type="gene ID" value="RB2143"/>
</dbReference>
<dbReference type="KEGG" id="rba:RB2143"/>
<dbReference type="PATRIC" id="fig|243090.15.peg.979"/>
<dbReference type="eggNOG" id="COG1154">
    <property type="taxonomic scope" value="Bacteria"/>
</dbReference>
<dbReference type="HOGENOM" id="CLU_009227_1_4_0"/>
<dbReference type="InParanoid" id="Q7UWB7"/>
<dbReference type="OrthoDB" id="9803371at2"/>
<dbReference type="UniPathway" id="UPA00064">
    <property type="reaction ID" value="UER00091"/>
</dbReference>
<dbReference type="Proteomes" id="UP000001025">
    <property type="component" value="Chromosome"/>
</dbReference>
<dbReference type="GO" id="GO:0005829">
    <property type="term" value="C:cytosol"/>
    <property type="evidence" value="ECO:0000318"/>
    <property type="project" value="GO_Central"/>
</dbReference>
<dbReference type="GO" id="GO:0008661">
    <property type="term" value="F:1-deoxy-D-xylulose-5-phosphate synthase activity"/>
    <property type="evidence" value="ECO:0000318"/>
    <property type="project" value="GO_Central"/>
</dbReference>
<dbReference type="GO" id="GO:0000287">
    <property type="term" value="F:magnesium ion binding"/>
    <property type="evidence" value="ECO:0007669"/>
    <property type="project" value="UniProtKB-UniRule"/>
</dbReference>
<dbReference type="GO" id="GO:0030976">
    <property type="term" value="F:thiamine pyrophosphate binding"/>
    <property type="evidence" value="ECO:0007669"/>
    <property type="project" value="UniProtKB-UniRule"/>
</dbReference>
<dbReference type="GO" id="GO:0052865">
    <property type="term" value="P:1-deoxy-D-xylulose 5-phosphate biosynthetic process"/>
    <property type="evidence" value="ECO:0007669"/>
    <property type="project" value="UniProtKB-UniPathway"/>
</dbReference>
<dbReference type="GO" id="GO:0019288">
    <property type="term" value="P:isopentenyl diphosphate biosynthetic process, methylerythritol 4-phosphate pathway"/>
    <property type="evidence" value="ECO:0000318"/>
    <property type="project" value="GO_Central"/>
</dbReference>
<dbReference type="GO" id="GO:0016114">
    <property type="term" value="P:terpenoid biosynthetic process"/>
    <property type="evidence" value="ECO:0007669"/>
    <property type="project" value="UniProtKB-UniRule"/>
</dbReference>
<dbReference type="GO" id="GO:0009228">
    <property type="term" value="P:thiamine biosynthetic process"/>
    <property type="evidence" value="ECO:0007669"/>
    <property type="project" value="UniProtKB-UniRule"/>
</dbReference>
<dbReference type="CDD" id="cd02007">
    <property type="entry name" value="TPP_DXS"/>
    <property type="match status" value="1"/>
</dbReference>
<dbReference type="CDD" id="cd07033">
    <property type="entry name" value="TPP_PYR_DXS_TK_like"/>
    <property type="match status" value="1"/>
</dbReference>
<dbReference type="FunFam" id="3.40.50.920:FF:000002">
    <property type="entry name" value="1-deoxy-D-xylulose-5-phosphate synthase"/>
    <property type="match status" value="1"/>
</dbReference>
<dbReference type="FunFam" id="3.40.50.970:FF:000133">
    <property type="entry name" value="1-deoxy-D-xylulose-5-phosphate synthase"/>
    <property type="match status" value="1"/>
</dbReference>
<dbReference type="Gene3D" id="3.40.50.920">
    <property type="match status" value="1"/>
</dbReference>
<dbReference type="Gene3D" id="3.40.50.970">
    <property type="match status" value="2"/>
</dbReference>
<dbReference type="HAMAP" id="MF_00315">
    <property type="entry name" value="DXP_synth"/>
    <property type="match status" value="1"/>
</dbReference>
<dbReference type="InterPro" id="IPR005477">
    <property type="entry name" value="Dxylulose-5-P_synthase"/>
</dbReference>
<dbReference type="InterPro" id="IPR029061">
    <property type="entry name" value="THDP-binding"/>
</dbReference>
<dbReference type="InterPro" id="IPR009014">
    <property type="entry name" value="Transketo_C/PFOR_II"/>
</dbReference>
<dbReference type="InterPro" id="IPR005475">
    <property type="entry name" value="Transketolase-like_Pyr-bd"/>
</dbReference>
<dbReference type="InterPro" id="IPR033248">
    <property type="entry name" value="Transketolase_C"/>
</dbReference>
<dbReference type="NCBIfam" id="TIGR00204">
    <property type="entry name" value="dxs"/>
    <property type="match status" value="1"/>
</dbReference>
<dbReference type="NCBIfam" id="NF003933">
    <property type="entry name" value="PRK05444.2-2"/>
    <property type="match status" value="1"/>
</dbReference>
<dbReference type="PANTHER" id="PTHR43322">
    <property type="entry name" value="1-D-DEOXYXYLULOSE 5-PHOSPHATE SYNTHASE-RELATED"/>
    <property type="match status" value="1"/>
</dbReference>
<dbReference type="PANTHER" id="PTHR43322:SF5">
    <property type="entry name" value="1-DEOXY-D-XYLULOSE-5-PHOSPHATE SYNTHASE, CHLOROPLASTIC"/>
    <property type="match status" value="1"/>
</dbReference>
<dbReference type="Pfam" id="PF13292">
    <property type="entry name" value="DXP_synthase_N"/>
    <property type="match status" value="1"/>
</dbReference>
<dbReference type="Pfam" id="PF02779">
    <property type="entry name" value="Transket_pyr"/>
    <property type="match status" value="1"/>
</dbReference>
<dbReference type="Pfam" id="PF02780">
    <property type="entry name" value="Transketolase_C"/>
    <property type="match status" value="1"/>
</dbReference>
<dbReference type="SMART" id="SM00861">
    <property type="entry name" value="Transket_pyr"/>
    <property type="match status" value="1"/>
</dbReference>
<dbReference type="SUPFAM" id="SSF52518">
    <property type="entry name" value="Thiamin diphosphate-binding fold (THDP-binding)"/>
    <property type="match status" value="2"/>
</dbReference>
<dbReference type="SUPFAM" id="SSF52922">
    <property type="entry name" value="TK C-terminal domain-like"/>
    <property type="match status" value="1"/>
</dbReference>
<keyword id="KW-0414">Isoprene biosynthesis</keyword>
<keyword id="KW-0460">Magnesium</keyword>
<keyword id="KW-0479">Metal-binding</keyword>
<keyword id="KW-1185">Reference proteome</keyword>
<keyword id="KW-0784">Thiamine biosynthesis</keyword>
<keyword id="KW-0786">Thiamine pyrophosphate</keyword>
<keyword id="KW-0808">Transferase</keyword>
<reference key="1">
    <citation type="journal article" date="2003" name="Proc. Natl. Acad. Sci. U.S.A.">
        <title>Complete genome sequence of the marine planctomycete Pirellula sp. strain 1.</title>
        <authorList>
            <person name="Gloeckner F.O."/>
            <person name="Kube M."/>
            <person name="Bauer M."/>
            <person name="Teeling H."/>
            <person name="Lombardot T."/>
            <person name="Ludwig W."/>
            <person name="Gade D."/>
            <person name="Beck A."/>
            <person name="Borzym K."/>
            <person name="Heitmann K."/>
            <person name="Rabus R."/>
            <person name="Schlesner H."/>
            <person name="Amann R."/>
            <person name="Reinhardt R."/>
        </authorList>
    </citation>
    <scope>NUCLEOTIDE SEQUENCE [LARGE SCALE GENOMIC DNA]</scope>
    <source>
        <strain>DSM 10527 / NCIMB 13988 / SH1</strain>
    </source>
</reference>
<sequence>MTDQKHPLLAGLQDATPLANWSSTELSNAAVEIRDVLCNLLATRTAHFASNLGVVELCLALHSEFDFRTDRLIWDTGHQVYPHKLVTGRYDRFETIRTAGGLMGYPNPHESVYDLFMTGHAGCSVSTAVGLRSGDILMDQKDRRTVAVIGDGAFPCGVVFEALNNAGELGDDLTIILNDNKMSICHRTGSVAQYLDRLRGNPFYTGLKHEVTKLLDRVPMFGDPAERLLAQMKEGVKAGLLGGMLFEELGIRYIGPIDGHDIPLMQKYLRLCKETPGPVLLHVVTEKGHGYKPAAEDPVFFHTPPAFEDRGGTPVTRGSDGRPPYTTHARDAIGEAMKRDSRVTVITAAMCQGNKLEPVREQFPERFFDVGICESHAVAFAAGQCKTGMRPIVDIYSTFLQRSYDQIFQEVALQDLPVVFMMDRAGLTAPDGPTHHGVYDIGYMRLFPNLVLMAPGYAEELSMMLDKALTLDHPSGIRYPKASALEATHTPAPIEIGKAEWIREGTDGTIVAYGAMLEQAIAAAEQLEGELEIGVVNARFVKPIDAEMVHKTLSDGRFVVTLEEGTRVGGFGSAFLESAVDQRLDTRAVHRLALPDEFVLHGDRSQLLDQSTLSAQKIAEVCREAASEVGSQVGI</sequence>
<protein>
    <recommendedName>
        <fullName evidence="1">1-deoxy-D-xylulose-5-phosphate synthase</fullName>
        <ecNumber evidence="1">2.2.1.7</ecNumber>
    </recommendedName>
    <alternativeName>
        <fullName evidence="1">1-deoxyxylulose-5-phosphate synthase</fullName>
        <shortName evidence="1">DXP synthase</shortName>
        <shortName evidence="1">DXPS</shortName>
    </alternativeName>
</protein>
<feature type="chain" id="PRO_0000189148" description="1-deoxy-D-xylulose-5-phosphate synthase">
    <location>
        <begin position="1"/>
        <end position="635"/>
    </location>
</feature>
<feature type="region of interest" description="Disordered" evidence="2">
    <location>
        <begin position="305"/>
        <end position="325"/>
    </location>
</feature>
<feature type="binding site" evidence="1">
    <location>
        <position position="78"/>
    </location>
    <ligand>
        <name>thiamine diphosphate</name>
        <dbReference type="ChEBI" id="CHEBI:58937"/>
    </ligand>
</feature>
<feature type="binding site" evidence="1">
    <location>
        <begin position="119"/>
        <end position="121"/>
    </location>
    <ligand>
        <name>thiamine diphosphate</name>
        <dbReference type="ChEBI" id="CHEBI:58937"/>
    </ligand>
</feature>
<feature type="binding site" evidence="1">
    <location>
        <position position="151"/>
    </location>
    <ligand>
        <name>Mg(2+)</name>
        <dbReference type="ChEBI" id="CHEBI:18420"/>
    </ligand>
</feature>
<feature type="binding site" evidence="1">
    <location>
        <begin position="152"/>
        <end position="153"/>
    </location>
    <ligand>
        <name>thiamine diphosphate</name>
        <dbReference type="ChEBI" id="CHEBI:58937"/>
    </ligand>
</feature>
<feature type="binding site" evidence="1">
    <location>
        <position position="180"/>
    </location>
    <ligand>
        <name>Mg(2+)</name>
        <dbReference type="ChEBI" id="CHEBI:18420"/>
    </ligand>
</feature>
<feature type="binding site" evidence="1">
    <location>
        <position position="180"/>
    </location>
    <ligand>
        <name>thiamine diphosphate</name>
        <dbReference type="ChEBI" id="CHEBI:58937"/>
    </ligand>
</feature>
<feature type="binding site" evidence="1">
    <location>
        <position position="291"/>
    </location>
    <ligand>
        <name>thiamine diphosphate</name>
        <dbReference type="ChEBI" id="CHEBI:58937"/>
    </ligand>
</feature>
<feature type="binding site" evidence="1">
    <location>
        <position position="374"/>
    </location>
    <ligand>
        <name>thiamine diphosphate</name>
        <dbReference type="ChEBI" id="CHEBI:58937"/>
    </ligand>
</feature>
<evidence type="ECO:0000255" key="1">
    <source>
        <dbReference type="HAMAP-Rule" id="MF_00315"/>
    </source>
</evidence>
<evidence type="ECO:0000256" key="2">
    <source>
        <dbReference type="SAM" id="MobiDB-lite"/>
    </source>
</evidence>
<comment type="function">
    <text evidence="1">Catalyzes the acyloin condensation reaction between C atoms 2 and 3 of pyruvate and glyceraldehyde 3-phosphate to yield 1-deoxy-D-xylulose-5-phosphate (DXP).</text>
</comment>
<comment type="catalytic activity">
    <reaction evidence="1">
        <text>D-glyceraldehyde 3-phosphate + pyruvate + H(+) = 1-deoxy-D-xylulose 5-phosphate + CO2</text>
        <dbReference type="Rhea" id="RHEA:12605"/>
        <dbReference type="ChEBI" id="CHEBI:15361"/>
        <dbReference type="ChEBI" id="CHEBI:15378"/>
        <dbReference type="ChEBI" id="CHEBI:16526"/>
        <dbReference type="ChEBI" id="CHEBI:57792"/>
        <dbReference type="ChEBI" id="CHEBI:59776"/>
        <dbReference type="EC" id="2.2.1.7"/>
    </reaction>
</comment>
<comment type="cofactor">
    <cofactor evidence="1">
        <name>Mg(2+)</name>
        <dbReference type="ChEBI" id="CHEBI:18420"/>
    </cofactor>
    <text evidence="1">Binds 1 Mg(2+) ion per subunit.</text>
</comment>
<comment type="cofactor">
    <cofactor evidence="1">
        <name>thiamine diphosphate</name>
        <dbReference type="ChEBI" id="CHEBI:58937"/>
    </cofactor>
    <text evidence="1">Binds 1 thiamine pyrophosphate per subunit.</text>
</comment>
<comment type="pathway">
    <text evidence="1">Metabolic intermediate biosynthesis; 1-deoxy-D-xylulose 5-phosphate biosynthesis; 1-deoxy-D-xylulose 5-phosphate from D-glyceraldehyde 3-phosphate and pyruvate: step 1/1.</text>
</comment>
<comment type="subunit">
    <text evidence="1">Homodimer.</text>
</comment>
<comment type="similarity">
    <text evidence="1">Belongs to the transketolase family. DXPS subfamily.</text>
</comment>